<name>ISCS_NEIG1</name>
<sequence length="404" mass="44578">MTVKTPVYLDYAATTPVDKRVAEKMIPYLTETFGNPASNSHAFGWTAEEAVEKARADIAALINADPKEIVFTSGATESDNLAIKGAANFYKTKGKHLITVKTEHKAVLDTMRELERQGFEVTYLGVQENGLIDLEELKAAIRDDTILISIMWVNNEIGVVQNIPAIGEICRERKIAFHVDAAQACGKVPVDVEAAKIDLLSMSAHKVYGPKGIGALYVRRKPRVRLEAQMHGGGHERGFRSGTLPTHQIVGMGEAFRIAKEELAQDTAHYLKLRDIFLKGIEGIEEVYINGDLEHRAPNNLNVSFNFVEGESLIMAVKELAVSSGSACTSASLEPSYVLRALGRNDELAHSSLRITFGRMTTEEEVQFAAELIKSKIGKLRELSPLWEMFKDGIDLNSIEWAAH</sequence>
<keyword id="KW-0001">2Fe-2S</keyword>
<keyword id="KW-0963">Cytoplasm</keyword>
<keyword id="KW-0408">Iron</keyword>
<keyword id="KW-0411">Iron-sulfur</keyword>
<keyword id="KW-0479">Metal-binding</keyword>
<keyword id="KW-0663">Pyridoxal phosphate</keyword>
<keyword id="KW-1185">Reference proteome</keyword>
<keyword id="KW-0808">Transferase</keyword>
<reference key="1">
    <citation type="submission" date="2003-03" db="EMBL/GenBank/DDBJ databases">
        <title>The complete genome sequence of Neisseria gonorrhoeae.</title>
        <authorList>
            <person name="Lewis L.A."/>
            <person name="Gillaspy A.F."/>
            <person name="McLaughlin R.E."/>
            <person name="Gipson M."/>
            <person name="Ducey T.F."/>
            <person name="Ownbey T."/>
            <person name="Hartman K."/>
            <person name="Nydick C."/>
            <person name="Carson M.B."/>
            <person name="Vaughn J."/>
            <person name="Thomson C."/>
            <person name="Song L."/>
            <person name="Lin S."/>
            <person name="Yuan X."/>
            <person name="Najar F."/>
            <person name="Zhan M."/>
            <person name="Ren Q."/>
            <person name="Zhu H."/>
            <person name="Qi S."/>
            <person name="Kenton S.M."/>
            <person name="Lai H."/>
            <person name="White J.D."/>
            <person name="Clifton S."/>
            <person name="Roe B.A."/>
            <person name="Dyer D.W."/>
        </authorList>
    </citation>
    <scope>NUCLEOTIDE SEQUENCE [LARGE SCALE GENOMIC DNA]</scope>
    <source>
        <strain>ATCC 700825 / FA 1090</strain>
    </source>
</reference>
<dbReference type="EC" id="2.8.1.7" evidence="1"/>
<dbReference type="EMBL" id="AE004969">
    <property type="protein sequence ID" value="AAW89363.1"/>
    <property type="molecule type" value="Genomic_DNA"/>
</dbReference>
<dbReference type="RefSeq" id="WP_003688882.1">
    <property type="nucleotide sequence ID" value="NC_002946.2"/>
</dbReference>
<dbReference type="RefSeq" id="YP_207775.1">
    <property type="nucleotide sequence ID" value="NC_002946.2"/>
</dbReference>
<dbReference type="SMR" id="Q5F8X4"/>
<dbReference type="STRING" id="242231.NGO_0636"/>
<dbReference type="KEGG" id="ngo:NGO_0636"/>
<dbReference type="PATRIC" id="fig|242231.10.peg.750"/>
<dbReference type="HOGENOM" id="CLU_003433_0_2_4"/>
<dbReference type="UniPathway" id="UPA00266"/>
<dbReference type="Proteomes" id="UP000000535">
    <property type="component" value="Chromosome"/>
</dbReference>
<dbReference type="GO" id="GO:1990221">
    <property type="term" value="C:L-cysteine desulfurase complex"/>
    <property type="evidence" value="ECO:0007669"/>
    <property type="project" value="UniProtKB-ARBA"/>
</dbReference>
<dbReference type="GO" id="GO:0051537">
    <property type="term" value="F:2 iron, 2 sulfur cluster binding"/>
    <property type="evidence" value="ECO:0007669"/>
    <property type="project" value="UniProtKB-UniRule"/>
</dbReference>
<dbReference type="GO" id="GO:0031071">
    <property type="term" value="F:cysteine desulfurase activity"/>
    <property type="evidence" value="ECO:0007669"/>
    <property type="project" value="UniProtKB-UniRule"/>
</dbReference>
<dbReference type="GO" id="GO:0046872">
    <property type="term" value="F:metal ion binding"/>
    <property type="evidence" value="ECO:0007669"/>
    <property type="project" value="UniProtKB-KW"/>
</dbReference>
<dbReference type="GO" id="GO:0030170">
    <property type="term" value="F:pyridoxal phosphate binding"/>
    <property type="evidence" value="ECO:0007669"/>
    <property type="project" value="UniProtKB-UniRule"/>
</dbReference>
<dbReference type="GO" id="GO:0044571">
    <property type="term" value="P:[2Fe-2S] cluster assembly"/>
    <property type="evidence" value="ECO:0007669"/>
    <property type="project" value="UniProtKB-UniRule"/>
</dbReference>
<dbReference type="FunFam" id="3.40.640.10:FF:000003">
    <property type="entry name" value="Cysteine desulfurase IscS"/>
    <property type="match status" value="1"/>
</dbReference>
<dbReference type="FunFam" id="3.90.1150.10:FF:000002">
    <property type="entry name" value="Cysteine desulfurase IscS"/>
    <property type="match status" value="1"/>
</dbReference>
<dbReference type="Gene3D" id="3.90.1150.10">
    <property type="entry name" value="Aspartate Aminotransferase, domain 1"/>
    <property type="match status" value="1"/>
</dbReference>
<dbReference type="Gene3D" id="3.40.640.10">
    <property type="entry name" value="Type I PLP-dependent aspartate aminotransferase-like (Major domain)"/>
    <property type="match status" value="1"/>
</dbReference>
<dbReference type="HAMAP" id="MF_00331">
    <property type="entry name" value="Cys_desulf_IscS"/>
    <property type="match status" value="1"/>
</dbReference>
<dbReference type="InterPro" id="IPR000192">
    <property type="entry name" value="Aminotrans_V_dom"/>
</dbReference>
<dbReference type="InterPro" id="IPR020578">
    <property type="entry name" value="Aminotrans_V_PyrdxlP_BS"/>
</dbReference>
<dbReference type="InterPro" id="IPR010240">
    <property type="entry name" value="Cys_deSase_IscS"/>
</dbReference>
<dbReference type="InterPro" id="IPR016454">
    <property type="entry name" value="Cysteine_dSase"/>
</dbReference>
<dbReference type="InterPro" id="IPR015424">
    <property type="entry name" value="PyrdxlP-dep_Trfase"/>
</dbReference>
<dbReference type="InterPro" id="IPR015421">
    <property type="entry name" value="PyrdxlP-dep_Trfase_major"/>
</dbReference>
<dbReference type="InterPro" id="IPR015422">
    <property type="entry name" value="PyrdxlP-dep_Trfase_small"/>
</dbReference>
<dbReference type="NCBIfam" id="TIGR02006">
    <property type="entry name" value="IscS"/>
    <property type="match status" value="1"/>
</dbReference>
<dbReference type="NCBIfam" id="NF010611">
    <property type="entry name" value="PRK14012.1"/>
    <property type="match status" value="1"/>
</dbReference>
<dbReference type="PANTHER" id="PTHR11601:SF34">
    <property type="entry name" value="CYSTEINE DESULFURASE"/>
    <property type="match status" value="1"/>
</dbReference>
<dbReference type="PANTHER" id="PTHR11601">
    <property type="entry name" value="CYSTEINE DESULFURYLASE FAMILY MEMBER"/>
    <property type="match status" value="1"/>
</dbReference>
<dbReference type="Pfam" id="PF00266">
    <property type="entry name" value="Aminotran_5"/>
    <property type="match status" value="1"/>
</dbReference>
<dbReference type="PIRSF" id="PIRSF005572">
    <property type="entry name" value="NifS"/>
    <property type="match status" value="1"/>
</dbReference>
<dbReference type="SUPFAM" id="SSF53383">
    <property type="entry name" value="PLP-dependent transferases"/>
    <property type="match status" value="1"/>
</dbReference>
<dbReference type="PROSITE" id="PS00595">
    <property type="entry name" value="AA_TRANSFER_CLASS_5"/>
    <property type="match status" value="1"/>
</dbReference>
<gene>
    <name evidence="1" type="primary">iscS</name>
    <name type="ordered locus">NGO_0636</name>
</gene>
<proteinExistence type="inferred from homology"/>
<evidence type="ECO:0000255" key="1">
    <source>
        <dbReference type="HAMAP-Rule" id="MF_00331"/>
    </source>
</evidence>
<comment type="function">
    <text evidence="1">Master enzyme that delivers sulfur to a number of partners involved in Fe-S cluster assembly, tRNA modification or cofactor biosynthesis. Catalyzes the removal of elemental sulfur atoms from cysteine to produce alanine. Functions as a sulfur delivery protein for Fe-S cluster synthesis onto IscU, an Fe-S scaffold assembly protein, as well as other S acceptor proteins.</text>
</comment>
<comment type="catalytic activity">
    <reaction evidence="1">
        <text>(sulfur carrier)-H + L-cysteine = (sulfur carrier)-SH + L-alanine</text>
        <dbReference type="Rhea" id="RHEA:43892"/>
        <dbReference type="Rhea" id="RHEA-COMP:14737"/>
        <dbReference type="Rhea" id="RHEA-COMP:14739"/>
        <dbReference type="ChEBI" id="CHEBI:29917"/>
        <dbReference type="ChEBI" id="CHEBI:35235"/>
        <dbReference type="ChEBI" id="CHEBI:57972"/>
        <dbReference type="ChEBI" id="CHEBI:64428"/>
        <dbReference type="EC" id="2.8.1.7"/>
    </reaction>
</comment>
<comment type="cofactor">
    <cofactor evidence="1">
        <name>pyridoxal 5'-phosphate</name>
        <dbReference type="ChEBI" id="CHEBI:597326"/>
    </cofactor>
</comment>
<comment type="pathway">
    <text evidence="1">Cofactor biosynthesis; iron-sulfur cluster biosynthesis.</text>
</comment>
<comment type="subunit">
    <text evidence="1">Homodimer. Forms a heterotetramer with IscU, interacts with other sulfur acceptors.</text>
</comment>
<comment type="subcellular location">
    <subcellularLocation>
        <location evidence="1">Cytoplasm</location>
    </subcellularLocation>
</comment>
<comment type="similarity">
    <text evidence="1">Belongs to the class-V pyridoxal-phosphate-dependent aminotransferase family. NifS/IscS subfamily.</text>
</comment>
<accession>Q5F8X4</accession>
<feature type="chain" id="PRO_1000019417" description="Cysteine desulfurase IscS">
    <location>
        <begin position="1"/>
        <end position="404"/>
    </location>
</feature>
<feature type="active site" description="Cysteine persulfide intermediate" evidence="1">
    <location>
        <position position="328"/>
    </location>
</feature>
<feature type="binding site" evidence="1">
    <location>
        <begin position="75"/>
        <end position="76"/>
    </location>
    <ligand>
        <name>pyridoxal 5'-phosphate</name>
        <dbReference type="ChEBI" id="CHEBI:597326"/>
    </ligand>
</feature>
<feature type="binding site" evidence="1">
    <location>
        <position position="155"/>
    </location>
    <ligand>
        <name>pyridoxal 5'-phosphate</name>
        <dbReference type="ChEBI" id="CHEBI:597326"/>
    </ligand>
</feature>
<feature type="binding site" evidence="1">
    <location>
        <position position="183"/>
    </location>
    <ligand>
        <name>pyridoxal 5'-phosphate</name>
        <dbReference type="ChEBI" id="CHEBI:597326"/>
    </ligand>
</feature>
<feature type="binding site" evidence="1">
    <location>
        <begin position="203"/>
        <end position="205"/>
    </location>
    <ligand>
        <name>pyridoxal 5'-phosphate</name>
        <dbReference type="ChEBI" id="CHEBI:597326"/>
    </ligand>
</feature>
<feature type="binding site" evidence="1">
    <location>
        <position position="243"/>
    </location>
    <ligand>
        <name>pyridoxal 5'-phosphate</name>
        <dbReference type="ChEBI" id="CHEBI:597326"/>
    </ligand>
</feature>
<feature type="binding site" description="via persulfide group" evidence="1">
    <location>
        <position position="328"/>
    </location>
    <ligand>
        <name>[2Fe-2S] cluster</name>
        <dbReference type="ChEBI" id="CHEBI:190135"/>
        <note>ligand shared with IscU</note>
    </ligand>
</feature>
<feature type="modified residue" description="N6-(pyridoxal phosphate)lysine" evidence="1">
    <location>
        <position position="206"/>
    </location>
</feature>
<organism>
    <name type="scientific">Neisseria gonorrhoeae (strain ATCC 700825 / FA 1090)</name>
    <dbReference type="NCBI Taxonomy" id="242231"/>
    <lineage>
        <taxon>Bacteria</taxon>
        <taxon>Pseudomonadati</taxon>
        <taxon>Pseudomonadota</taxon>
        <taxon>Betaproteobacteria</taxon>
        <taxon>Neisseriales</taxon>
        <taxon>Neisseriaceae</taxon>
        <taxon>Neisseria</taxon>
    </lineage>
</organism>
<protein>
    <recommendedName>
        <fullName evidence="1">Cysteine desulfurase IscS</fullName>
        <ecNumber evidence="1">2.8.1.7</ecNumber>
    </recommendedName>
</protein>